<dbReference type="EC" id="1.8.4.12" evidence="1"/>
<dbReference type="EMBL" id="CU928160">
    <property type="protein sequence ID" value="CAQ98697.1"/>
    <property type="molecule type" value="Genomic_DNA"/>
</dbReference>
<dbReference type="RefSeq" id="WP_001284613.1">
    <property type="nucleotide sequence ID" value="NC_011741.1"/>
</dbReference>
<dbReference type="SMR" id="B7M1J2"/>
<dbReference type="KEGG" id="ecr:ECIAI1_1842"/>
<dbReference type="HOGENOM" id="CLU_031040_8_5_6"/>
<dbReference type="GO" id="GO:0005737">
    <property type="term" value="C:cytoplasm"/>
    <property type="evidence" value="ECO:0007669"/>
    <property type="project" value="TreeGrafter"/>
</dbReference>
<dbReference type="GO" id="GO:0033743">
    <property type="term" value="F:peptide-methionine (R)-S-oxide reductase activity"/>
    <property type="evidence" value="ECO:0007669"/>
    <property type="project" value="UniProtKB-UniRule"/>
</dbReference>
<dbReference type="GO" id="GO:0008270">
    <property type="term" value="F:zinc ion binding"/>
    <property type="evidence" value="ECO:0007669"/>
    <property type="project" value="UniProtKB-UniRule"/>
</dbReference>
<dbReference type="GO" id="GO:0030091">
    <property type="term" value="P:protein repair"/>
    <property type="evidence" value="ECO:0007669"/>
    <property type="project" value="InterPro"/>
</dbReference>
<dbReference type="GO" id="GO:0006979">
    <property type="term" value="P:response to oxidative stress"/>
    <property type="evidence" value="ECO:0007669"/>
    <property type="project" value="InterPro"/>
</dbReference>
<dbReference type="FunFam" id="2.170.150.20:FF:000001">
    <property type="entry name" value="Peptide methionine sulfoxide reductase MsrB"/>
    <property type="match status" value="1"/>
</dbReference>
<dbReference type="Gene3D" id="2.170.150.20">
    <property type="entry name" value="Peptide methionine sulfoxide reductase"/>
    <property type="match status" value="1"/>
</dbReference>
<dbReference type="HAMAP" id="MF_01400">
    <property type="entry name" value="MsrB"/>
    <property type="match status" value="1"/>
</dbReference>
<dbReference type="InterPro" id="IPR028427">
    <property type="entry name" value="Met_Sox_Rdtase_MsrB"/>
</dbReference>
<dbReference type="InterPro" id="IPR002579">
    <property type="entry name" value="Met_Sox_Rdtase_MsrB_dom"/>
</dbReference>
<dbReference type="InterPro" id="IPR011057">
    <property type="entry name" value="Mss4-like_sf"/>
</dbReference>
<dbReference type="NCBIfam" id="TIGR00357">
    <property type="entry name" value="peptide-methionine (R)-S-oxide reductase MsrB"/>
    <property type="match status" value="1"/>
</dbReference>
<dbReference type="PANTHER" id="PTHR10173">
    <property type="entry name" value="METHIONINE SULFOXIDE REDUCTASE"/>
    <property type="match status" value="1"/>
</dbReference>
<dbReference type="PANTHER" id="PTHR10173:SF52">
    <property type="entry name" value="METHIONINE-R-SULFOXIDE REDUCTASE B1"/>
    <property type="match status" value="1"/>
</dbReference>
<dbReference type="Pfam" id="PF01641">
    <property type="entry name" value="SelR"/>
    <property type="match status" value="1"/>
</dbReference>
<dbReference type="SUPFAM" id="SSF51316">
    <property type="entry name" value="Mss4-like"/>
    <property type="match status" value="1"/>
</dbReference>
<dbReference type="PROSITE" id="PS51790">
    <property type="entry name" value="MSRB"/>
    <property type="match status" value="1"/>
</dbReference>
<sequence>MANKPSAEELKKNLSEMQFYVTQNHGTEPPFTGRLLHNKRDGVYHCLICDAPLFHSETKYDSGCGWPSFYEPVSEESIRYIKDLSHGMQRIEIRCGNCDAHLGHVFPDGPQPTGERYCVNSASLRFTDGENGEEING</sequence>
<keyword id="KW-0479">Metal-binding</keyword>
<keyword id="KW-0560">Oxidoreductase</keyword>
<keyword id="KW-0862">Zinc</keyword>
<name>MSRB_ECO8A</name>
<organism>
    <name type="scientific">Escherichia coli O8 (strain IAI1)</name>
    <dbReference type="NCBI Taxonomy" id="585034"/>
    <lineage>
        <taxon>Bacteria</taxon>
        <taxon>Pseudomonadati</taxon>
        <taxon>Pseudomonadota</taxon>
        <taxon>Gammaproteobacteria</taxon>
        <taxon>Enterobacterales</taxon>
        <taxon>Enterobacteriaceae</taxon>
        <taxon>Escherichia</taxon>
    </lineage>
</organism>
<evidence type="ECO:0000255" key="1">
    <source>
        <dbReference type="HAMAP-Rule" id="MF_01400"/>
    </source>
</evidence>
<evidence type="ECO:0000255" key="2">
    <source>
        <dbReference type="PROSITE-ProRule" id="PRU01126"/>
    </source>
</evidence>
<gene>
    <name evidence="1" type="primary">msrB</name>
    <name type="ordered locus">ECIAI1_1842</name>
</gene>
<comment type="catalytic activity">
    <reaction evidence="1">
        <text>L-methionyl-[protein] + [thioredoxin]-disulfide + H2O = L-methionyl-(R)-S-oxide-[protein] + [thioredoxin]-dithiol</text>
        <dbReference type="Rhea" id="RHEA:24164"/>
        <dbReference type="Rhea" id="RHEA-COMP:10698"/>
        <dbReference type="Rhea" id="RHEA-COMP:10700"/>
        <dbReference type="Rhea" id="RHEA-COMP:12313"/>
        <dbReference type="Rhea" id="RHEA-COMP:12314"/>
        <dbReference type="ChEBI" id="CHEBI:15377"/>
        <dbReference type="ChEBI" id="CHEBI:16044"/>
        <dbReference type="ChEBI" id="CHEBI:29950"/>
        <dbReference type="ChEBI" id="CHEBI:45764"/>
        <dbReference type="ChEBI" id="CHEBI:50058"/>
        <dbReference type="EC" id="1.8.4.12"/>
    </reaction>
</comment>
<comment type="cofactor">
    <cofactor evidence="1">
        <name>Zn(2+)</name>
        <dbReference type="ChEBI" id="CHEBI:29105"/>
    </cofactor>
    <text evidence="1">Binds 1 zinc ion per subunit. The zinc ion is important for the structural integrity of the protein.</text>
</comment>
<comment type="similarity">
    <text evidence="1">Belongs to the MsrB Met sulfoxide reductase family.</text>
</comment>
<feature type="chain" id="PRO_1000145367" description="Peptide methionine sulfoxide reductase MsrB">
    <location>
        <begin position="1"/>
        <end position="137"/>
    </location>
</feature>
<feature type="domain" description="MsrB" evidence="2">
    <location>
        <begin position="7"/>
        <end position="129"/>
    </location>
</feature>
<feature type="active site" description="Nucleophile" evidence="2">
    <location>
        <position position="118"/>
    </location>
</feature>
<feature type="binding site" evidence="2">
    <location>
        <position position="46"/>
    </location>
    <ligand>
        <name>Zn(2+)</name>
        <dbReference type="ChEBI" id="CHEBI:29105"/>
    </ligand>
</feature>
<feature type="binding site" evidence="2">
    <location>
        <position position="49"/>
    </location>
    <ligand>
        <name>Zn(2+)</name>
        <dbReference type="ChEBI" id="CHEBI:29105"/>
    </ligand>
</feature>
<feature type="binding site" evidence="2">
    <location>
        <position position="95"/>
    </location>
    <ligand>
        <name>Zn(2+)</name>
        <dbReference type="ChEBI" id="CHEBI:29105"/>
    </ligand>
</feature>
<feature type="binding site" evidence="2">
    <location>
        <position position="98"/>
    </location>
    <ligand>
        <name>Zn(2+)</name>
        <dbReference type="ChEBI" id="CHEBI:29105"/>
    </ligand>
</feature>
<accession>B7M1J2</accession>
<protein>
    <recommendedName>
        <fullName evidence="1">Peptide methionine sulfoxide reductase MsrB</fullName>
        <ecNumber evidence="1">1.8.4.12</ecNumber>
    </recommendedName>
    <alternativeName>
        <fullName evidence="1">Peptide-methionine (R)-S-oxide reductase</fullName>
    </alternativeName>
</protein>
<proteinExistence type="inferred from homology"/>
<reference key="1">
    <citation type="journal article" date="2009" name="PLoS Genet.">
        <title>Organised genome dynamics in the Escherichia coli species results in highly diverse adaptive paths.</title>
        <authorList>
            <person name="Touchon M."/>
            <person name="Hoede C."/>
            <person name="Tenaillon O."/>
            <person name="Barbe V."/>
            <person name="Baeriswyl S."/>
            <person name="Bidet P."/>
            <person name="Bingen E."/>
            <person name="Bonacorsi S."/>
            <person name="Bouchier C."/>
            <person name="Bouvet O."/>
            <person name="Calteau A."/>
            <person name="Chiapello H."/>
            <person name="Clermont O."/>
            <person name="Cruveiller S."/>
            <person name="Danchin A."/>
            <person name="Diard M."/>
            <person name="Dossat C."/>
            <person name="Karoui M.E."/>
            <person name="Frapy E."/>
            <person name="Garry L."/>
            <person name="Ghigo J.M."/>
            <person name="Gilles A.M."/>
            <person name="Johnson J."/>
            <person name="Le Bouguenec C."/>
            <person name="Lescat M."/>
            <person name="Mangenot S."/>
            <person name="Martinez-Jehanne V."/>
            <person name="Matic I."/>
            <person name="Nassif X."/>
            <person name="Oztas S."/>
            <person name="Petit M.A."/>
            <person name="Pichon C."/>
            <person name="Rouy Z."/>
            <person name="Ruf C.S."/>
            <person name="Schneider D."/>
            <person name="Tourret J."/>
            <person name="Vacherie B."/>
            <person name="Vallenet D."/>
            <person name="Medigue C."/>
            <person name="Rocha E.P.C."/>
            <person name="Denamur E."/>
        </authorList>
    </citation>
    <scope>NUCLEOTIDE SEQUENCE [LARGE SCALE GENOMIC DNA]</scope>
    <source>
        <strain>IAI1</strain>
    </source>
</reference>